<gene>
    <name evidence="1" type="primary">rps18</name>
</gene>
<comment type="subunit">
    <text>Part of the 30S ribosomal subunit.</text>
</comment>
<comment type="subcellular location">
    <subcellularLocation>
        <location>Plastid</location>
        <location>Chloroplast</location>
    </subcellularLocation>
</comment>
<comment type="similarity">
    <text evidence="1">Belongs to the bacterial ribosomal protein bS18 family.</text>
</comment>
<protein>
    <recommendedName>
        <fullName evidence="1">Small ribosomal subunit protein bS18c</fullName>
    </recommendedName>
    <alternativeName>
        <fullName evidence="2">30S ribosomal protein S18, chloroplastic</fullName>
    </alternativeName>
</protein>
<dbReference type="EMBL" id="DQ864733">
    <property type="protein sequence ID" value="ABI49042.1"/>
    <property type="molecule type" value="Genomic_DNA"/>
</dbReference>
<dbReference type="RefSeq" id="YP_740497.1">
    <property type="nucleotide sequence ID" value="NC_008334.1"/>
</dbReference>
<dbReference type="SMR" id="Q09MF6"/>
<dbReference type="GeneID" id="4271122"/>
<dbReference type="KEGG" id="cit:4271122"/>
<dbReference type="OrthoDB" id="901578at71240"/>
<dbReference type="GO" id="GO:0009507">
    <property type="term" value="C:chloroplast"/>
    <property type="evidence" value="ECO:0007669"/>
    <property type="project" value="UniProtKB-SubCell"/>
</dbReference>
<dbReference type="GO" id="GO:1990904">
    <property type="term" value="C:ribonucleoprotein complex"/>
    <property type="evidence" value="ECO:0007669"/>
    <property type="project" value="UniProtKB-KW"/>
</dbReference>
<dbReference type="GO" id="GO:0005840">
    <property type="term" value="C:ribosome"/>
    <property type="evidence" value="ECO:0007669"/>
    <property type="project" value="UniProtKB-KW"/>
</dbReference>
<dbReference type="GO" id="GO:0019843">
    <property type="term" value="F:rRNA binding"/>
    <property type="evidence" value="ECO:0007669"/>
    <property type="project" value="UniProtKB-UniRule"/>
</dbReference>
<dbReference type="GO" id="GO:0003735">
    <property type="term" value="F:structural constituent of ribosome"/>
    <property type="evidence" value="ECO:0007669"/>
    <property type="project" value="InterPro"/>
</dbReference>
<dbReference type="GO" id="GO:0006412">
    <property type="term" value="P:translation"/>
    <property type="evidence" value="ECO:0007669"/>
    <property type="project" value="UniProtKB-UniRule"/>
</dbReference>
<dbReference type="FunFam" id="4.10.640.10:FF:000002">
    <property type="entry name" value="30S ribosomal protein S18, chloroplastic"/>
    <property type="match status" value="1"/>
</dbReference>
<dbReference type="Gene3D" id="4.10.640.10">
    <property type="entry name" value="Ribosomal protein S18"/>
    <property type="match status" value="1"/>
</dbReference>
<dbReference type="HAMAP" id="MF_00270">
    <property type="entry name" value="Ribosomal_bS18"/>
    <property type="match status" value="1"/>
</dbReference>
<dbReference type="InterPro" id="IPR001648">
    <property type="entry name" value="Ribosomal_bS18"/>
</dbReference>
<dbReference type="InterPro" id="IPR018275">
    <property type="entry name" value="Ribosomal_bS18_CS"/>
</dbReference>
<dbReference type="InterPro" id="IPR036870">
    <property type="entry name" value="Ribosomal_bS18_sf"/>
</dbReference>
<dbReference type="NCBIfam" id="TIGR00165">
    <property type="entry name" value="S18"/>
    <property type="match status" value="1"/>
</dbReference>
<dbReference type="PANTHER" id="PTHR13479">
    <property type="entry name" value="30S RIBOSOMAL PROTEIN S18"/>
    <property type="match status" value="1"/>
</dbReference>
<dbReference type="PANTHER" id="PTHR13479:SF40">
    <property type="entry name" value="SMALL RIBOSOMAL SUBUNIT PROTEIN BS18M"/>
    <property type="match status" value="1"/>
</dbReference>
<dbReference type="Pfam" id="PF01084">
    <property type="entry name" value="Ribosomal_S18"/>
    <property type="match status" value="1"/>
</dbReference>
<dbReference type="PRINTS" id="PR00974">
    <property type="entry name" value="RIBOSOMALS18"/>
</dbReference>
<dbReference type="SUPFAM" id="SSF46911">
    <property type="entry name" value="Ribosomal protein S18"/>
    <property type="match status" value="1"/>
</dbReference>
<dbReference type="PROSITE" id="PS00057">
    <property type="entry name" value="RIBOSOMAL_S18"/>
    <property type="match status" value="1"/>
</dbReference>
<sequence length="101" mass="11981">MDKTKRLFLKSKRSFRRRLPPIQSGDRIDYRNMTLISRFLSEQGKILSRRVNRLTLKEQRLITIAIKQARILSSLPFLNNEKQFERSGLTARPPGLRTRKK</sequence>
<evidence type="ECO:0000255" key="1">
    <source>
        <dbReference type="HAMAP-Rule" id="MF_00270"/>
    </source>
</evidence>
<evidence type="ECO:0000305" key="2"/>
<accession>Q09MF6</accession>
<organism>
    <name type="scientific">Citrus sinensis</name>
    <name type="common">Sweet orange</name>
    <name type="synonym">Citrus aurantium var. sinensis</name>
    <dbReference type="NCBI Taxonomy" id="2711"/>
    <lineage>
        <taxon>Eukaryota</taxon>
        <taxon>Viridiplantae</taxon>
        <taxon>Streptophyta</taxon>
        <taxon>Embryophyta</taxon>
        <taxon>Tracheophyta</taxon>
        <taxon>Spermatophyta</taxon>
        <taxon>Magnoliopsida</taxon>
        <taxon>eudicotyledons</taxon>
        <taxon>Gunneridae</taxon>
        <taxon>Pentapetalae</taxon>
        <taxon>rosids</taxon>
        <taxon>malvids</taxon>
        <taxon>Sapindales</taxon>
        <taxon>Rutaceae</taxon>
        <taxon>Aurantioideae</taxon>
        <taxon>Citrus</taxon>
    </lineage>
</organism>
<reference key="1">
    <citation type="journal article" date="2006" name="BMC Plant Biol.">
        <title>The complete chloroplast genome sequence of Citrus sinensis (L.) Osbeck var 'Ridge Pineapple': organization and phylogenetic relationships to other angiosperms.</title>
        <authorList>
            <person name="Bausher M.G."/>
            <person name="Singh N.D."/>
            <person name="Lee S.-B."/>
            <person name="Jansen R.K."/>
            <person name="Daniell H."/>
        </authorList>
    </citation>
    <scope>NUCLEOTIDE SEQUENCE [LARGE SCALE GENOMIC DNA]</scope>
    <source>
        <strain>cv. Osbeck var. Ridge Pineapple</strain>
    </source>
</reference>
<keyword id="KW-0150">Chloroplast</keyword>
<keyword id="KW-0934">Plastid</keyword>
<keyword id="KW-0687">Ribonucleoprotein</keyword>
<keyword id="KW-0689">Ribosomal protein</keyword>
<keyword id="KW-0694">RNA-binding</keyword>
<keyword id="KW-0699">rRNA-binding</keyword>
<feature type="chain" id="PRO_0000276863" description="Small ribosomal subunit protein bS18c">
    <location>
        <begin position="1"/>
        <end position="101"/>
    </location>
</feature>
<proteinExistence type="inferred from homology"/>
<name>RR18_CITSI</name>
<geneLocation type="chloroplast"/>